<proteinExistence type="inferred from homology"/>
<name>GATC_BACAC</name>
<accession>C3L558</accession>
<reference key="1">
    <citation type="submission" date="2008-10" db="EMBL/GenBank/DDBJ databases">
        <title>Genome sequence of Bacillus anthracis str. CDC 684.</title>
        <authorList>
            <person name="Dodson R.J."/>
            <person name="Munk A.C."/>
            <person name="Brettin T."/>
            <person name="Bruce D."/>
            <person name="Detter C."/>
            <person name="Tapia R."/>
            <person name="Han C."/>
            <person name="Sutton G."/>
            <person name="Sims D."/>
        </authorList>
    </citation>
    <scope>NUCLEOTIDE SEQUENCE [LARGE SCALE GENOMIC DNA]</scope>
    <source>
        <strain>CDC 684 / NRRL 3495</strain>
    </source>
</reference>
<sequence length="96" mass="10866">MSRISVENVKHVAHLARLAITDQEAEKFQKQLDAIVTFAEQLNELDTTDVKPTTHVLTMKNVMREDVPEKGLPVEEVLKNAPDHKDNQIRVPAVLE</sequence>
<evidence type="ECO:0000255" key="1">
    <source>
        <dbReference type="HAMAP-Rule" id="MF_00122"/>
    </source>
</evidence>
<gene>
    <name evidence="1" type="primary">gatC</name>
    <name type="ordered locus">BAMEG_0379</name>
</gene>
<organism>
    <name type="scientific">Bacillus anthracis (strain CDC 684 / NRRL 3495)</name>
    <dbReference type="NCBI Taxonomy" id="568206"/>
    <lineage>
        <taxon>Bacteria</taxon>
        <taxon>Bacillati</taxon>
        <taxon>Bacillota</taxon>
        <taxon>Bacilli</taxon>
        <taxon>Bacillales</taxon>
        <taxon>Bacillaceae</taxon>
        <taxon>Bacillus</taxon>
        <taxon>Bacillus cereus group</taxon>
    </lineage>
</organism>
<keyword id="KW-0067">ATP-binding</keyword>
<keyword id="KW-0436">Ligase</keyword>
<keyword id="KW-0547">Nucleotide-binding</keyword>
<keyword id="KW-0648">Protein biosynthesis</keyword>
<protein>
    <recommendedName>
        <fullName evidence="1">Aspartyl/glutamyl-tRNA(Asn/Gln) amidotransferase subunit C</fullName>
        <shortName evidence="1">Asp/Glu-ADT subunit C</shortName>
        <ecNumber evidence="1">6.3.5.-</ecNumber>
    </recommendedName>
</protein>
<dbReference type="EC" id="6.3.5.-" evidence="1"/>
<dbReference type="EMBL" id="CP001215">
    <property type="protein sequence ID" value="ACP14944.1"/>
    <property type="molecule type" value="Genomic_DNA"/>
</dbReference>
<dbReference type="RefSeq" id="WP_000086999.1">
    <property type="nucleotide sequence ID" value="NC_012581.1"/>
</dbReference>
<dbReference type="SMR" id="C3L558"/>
<dbReference type="GeneID" id="93010705"/>
<dbReference type="KEGG" id="bah:BAMEG_0379"/>
<dbReference type="HOGENOM" id="CLU_105899_6_1_9"/>
<dbReference type="GO" id="GO:0050566">
    <property type="term" value="F:asparaginyl-tRNA synthase (glutamine-hydrolyzing) activity"/>
    <property type="evidence" value="ECO:0007669"/>
    <property type="project" value="RHEA"/>
</dbReference>
<dbReference type="GO" id="GO:0005524">
    <property type="term" value="F:ATP binding"/>
    <property type="evidence" value="ECO:0007669"/>
    <property type="project" value="UniProtKB-KW"/>
</dbReference>
<dbReference type="GO" id="GO:0050567">
    <property type="term" value="F:glutaminyl-tRNA synthase (glutamine-hydrolyzing) activity"/>
    <property type="evidence" value="ECO:0007669"/>
    <property type="project" value="UniProtKB-UniRule"/>
</dbReference>
<dbReference type="GO" id="GO:0070681">
    <property type="term" value="P:glutaminyl-tRNAGln biosynthesis via transamidation"/>
    <property type="evidence" value="ECO:0007669"/>
    <property type="project" value="TreeGrafter"/>
</dbReference>
<dbReference type="GO" id="GO:0006450">
    <property type="term" value="P:regulation of translational fidelity"/>
    <property type="evidence" value="ECO:0007669"/>
    <property type="project" value="InterPro"/>
</dbReference>
<dbReference type="GO" id="GO:0006412">
    <property type="term" value="P:translation"/>
    <property type="evidence" value="ECO:0007669"/>
    <property type="project" value="UniProtKB-UniRule"/>
</dbReference>
<dbReference type="Gene3D" id="1.10.20.60">
    <property type="entry name" value="Glu-tRNAGln amidotransferase C subunit, N-terminal domain"/>
    <property type="match status" value="1"/>
</dbReference>
<dbReference type="HAMAP" id="MF_00122">
    <property type="entry name" value="GatC"/>
    <property type="match status" value="1"/>
</dbReference>
<dbReference type="InterPro" id="IPR036113">
    <property type="entry name" value="Asp/Glu-ADT_sf_sub_c"/>
</dbReference>
<dbReference type="InterPro" id="IPR003837">
    <property type="entry name" value="GatC"/>
</dbReference>
<dbReference type="NCBIfam" id="TIGR00135">
    <property type="entry name" value="gatC"/>
    <property type="match status" value="1"/>
</dbReference>
<dbReference type="PANTHER" id="PTHR15004">
    <property type="entry name" value="GLUTAMYL-TRNA(GLN) AMIDOTRANSFERASE SUBUNIT C, MITOCHONDRIAL"/>
    <property type="match status" value="1"/>
</dbReference>
<dbReference type="PANTHER" id="PTHR15004:SF0">
    <property type="entry name" value="GLUTAMYL-TRNA(GLN) AMIDOTRANSFERASE SUBUNIT C, MITOCHONDRIAL"/>
    <property type="match status" value="1"/>
</dbReference>
<dbReference type="Pfam" id="PF02686">
    <property type="entry name" value="GatC"/>
    <property type="match status" value="1"/>
</dbReference>
<dbReference type="SUPFAM" id="SSF141000">
    <property type="entry name" value="Glu-tRNAGln amidotransferase C subunit"/>
    <property type="match status" value="1"/>
</dbReference>
<feature type="chain" id="PRO_1000122552" description="Aspartyl/glutamyl-tRNA(Asn/Gln) amidotransferase subunit C">
    <location>
        <begin position="1"/>
        <end position="96"/>
    </location>
</feature>
<comment type="function">
    <text evidence="1">Allows the formation of correctly charged Asn-tRNA(Asn) or Gln-tRNA(Gln) through the transamidation of misacylated Asp-tRNA(Asn) or Glu-tRNA(Gln) in organisms which lack either or both of asparaginyl-tRNA or glutaminyl-tRNA synthetases. The reaction takes place in the presence of glutamine and ATP through an activated phospho-Asp-tRNA(Asn) or phospho-Glu-tRNA(Gln).</text>
</comment>
<comment type="catalytic activity">
    <reaction evidence="1">
        <text>L-glutamyl-tRNA(Gln) + L-glutamine + ATP + H2O = L-glutaminyl-tRNA(Gln) + L-glutamate + ADP + phosphate + H(+)</text>
        <dbReference type="Rhea" id="RHEA:17521"/>
        <dbReference type="Rhea" id="RHEA-COMP:9681"/>
        <dbReference type="Rhea" id="RHEA-COMP:9684"/>
        <dbReference type="ChEBI" id="CHEBI:15377"/>
        <dbReference type="ChEBI" id="CHEBI:15378"/>
        <dbReference type="ChEBI" id="CHEBI:29985"/>
        <dbReference type="ChEBI" id="CHEBI:30616"/>
        <dbReference type="ChEBI" id="CHEBI:43474"/>
        <dbReference type="ChEBI" id="CHEBI:58359"/>
        <dbReference type="ChEBI" id="CHEBI:78520"/>
        <dbReference type="ChEBI" id="CHEBI:78521"/>
        <dbReference type="ChEBI" id="CHEBI:456216"/>
    </reaction>
</comment>
<comment type="catalytic activity">
    <reaction evidence="1">
        <text>L-aspartyl-tRNA(Asn) + L-glutamine + ATP + H2O = L-asparaginyl-tRNA(Asn) + L-glutamate + ADP + phosphate + 2 H(+)</text>
        <dbReference type="Rhea" id="RHEA:14513"/>
        <dbReference type="Rhea" id="RHEA-COMP:9674"/>
        <dbReference type="Rhea" id="RHEA-COMP:9677"/>
        <dbReference type="ChEBI" id="CHEBI:15377"/>
        <dbReference type="ChEBI" id="CHEBI:15378"/>
        <dbReference type="ChEBI" id="CHEBI:29985"/>
        <dbReference type="ChEBI" id="CHEBI:30616"/>
        <dbReference type="ChEBI" id="CHEBI:43474"/>
        <dbReference type="ChEBI" id="CHEBI:58359"/>
        <dbReference type="ChEBI" id="CHEBI:78515"/>
        <dbReference type="ChEBI" id="CHEBI:78516"/>
        <dbReference type="ChEBI" id="CHEBI:456216"/>
    </reaction>
</comment>
<comment type="subunit">
    <text evidence="1">Heterotrimer of A, B and C subunits.</text>
</comment>
<comment type="similarity">
    <text evidence="1">Belongs to the GatC family.</text>
</comment>